<keyword id="KW-0963">Cytoplasm</keyword>
<keyword id="KW-0342">GTP-binding</keyword>
<keyword id="KW-0436">Ligase</keyword>
<keyword id="KW-0460">Magnesium</keyword>
<keyword id="KW-0479">Metal-binding</keyword>
<keyword id="KW-0547">Nucleotide-binding</keyword>
<keyword id="KW-0658">Purine biosynthesis</keyword>
<keyword id="KW-1185">Reference proteome</keyword>
<comment type="function">
    <text evidence="1">Plays an important role in the de novo pathway of purine nucleotide biosynthesis. Catalyzes the first committed step in the biosynthesis of AMP from IMP.</text>
</comment>
<comment type="catalytic activity">
    <reaction evidence="1">
        <text>IMP + L-aspartate + GTP = N(6)-(1,2-dicarboxyethyl)-AMP + GDP + phosphate + 2 H(+)</text>
        <dbReference type="Rhea" id="RHEA:15753"/>
        <dbReference type="ChEBI" id="CHEBI:15378"/>
        <dbReference type="ChEBI" id="CHEBI:29991"/>
        <dbReference type="ChEBI" id="CHEBI:37565"/>
        <dbReference type="ChEBI" id="CHEBI:43474"/>
        <dbReference type="ChEBI" id="CHEBI:57567"/>
        <dbReference type="ChEBI" id="CHEBI:58053"/>
        <dbReference type="ChEBI" id="CHEBI:58189"/>
        <dbReference type="EC" id="6.3.4.4"/>
    </reaction>
</comment>
<comment type="cofactor">
    <cofactor evidence="1">
        <name>Mg(2+)</name>
        <dbReference type="ChEBI" id="CHEBI:18420"/>
    </cofactor>
    <text evidence="1">Binds 1 Mg(2+) ion per subunit.</text>
</comment>
<comment type="pathway">
    <text evidence="1">Purine metabolism; AMP biosynthesis via de novo pathway; AMP from IMP: step 1/2.</text>
</comment>
<comment type="subunit">
    <text evidence="1">Homodimer.</text>
</comment>
<comment type="subcellular location">
    <subcellularLocation>
        <location evidence="1">Cytoplasm</location>
    </subcellularLocation>
</comment>
<comment type="similarity">
    <text evidence="1">Belongs to the adenylosuccinate synthetase family.</text>
</comment>
<sequence>MAAIVIVGAQWGDEGKGKATDILGGKVDYVVKPNGGNNAGHTVVVGGEKYELKLLPAGILSENATPVLGNGVVINLEALFDEIDGLEARGANASRLKISANAHLVAPYHQTLDRVQERFLGKRAIGTTGRGIGPAYADKVARIGIRVQDIFDESILRQKVESALDIKNQMLVKMYNRKAIEPEQVVEYFLSYRDRLRPMVIEAELELNQALDEGKHVLMEGGQATMLDVDHGTYPFVTSSNPTAGGAAVGSGIGPTRITTSLGIIKAYTTRVGAGPFPTELFDKWGEYLQTTGGEIGVNTGRKRRCGWYDSVIARYATRVNGFTDYFLTKLDVLTGIGEIPICVAYDVDGKRYDEMPLTQSEFHHAEPIFETMPAWDEDITGCQTFEELPQKAQDYVLRLEELSGCRISYIGVGPGRDQTIVRHDVMQDQ</sequence>
<gene>
    <name evidence="1" type="primary">purA</name>
    <name type="ordered locus">cauri_2295</name>
</gene>
<proteinExistence type="inferred from homology"/>
<protein>
    <recommendedName>
        <fullName evidence="1">Adenylosuccinate synthetase</fullName>
        <shortName evidence="1">AMPSase</shortName>
        <shortName evidence="1">AdSS</shortName>
        <ecNumber evidence="1">6.3.4.4</ecNumber>
    </recommendedName>
    <alternativeName>
        <fullName evidence="1">IMP--aspartate ligase</fullName>
    </alternativeName>
</protein>
<dbReference type="EC" id="6.3.4.4" evidence="1"/>
<dbReference type="EMBL" id="CP001601">
    <property type="protein sequence ID" value="ACP33886.1"/>
    <property type="molecule type" value="Genomic_DNA"/>
</dbReference>
<dbReference type="RefSeq" id="WP_010188714.1">
    <property type="nucleotide sequence ID" value="NC_012590.1"/>
</dbReference>
<dbReference type="SMR" id="C3PJK0"/>
<dbReference type="STRING" id="548476.cauri_2295"/>
<dbReference type="GeneID" id="31924944"/>
<dbReference type="KEGG" id="car:cauri_2295"/>
<dbReference type="eggNOG" id="COG0104">
    <property type="taxonomic scope" value="Bacteria"/>
</dbReference>
<dbReference type="HOGENOM" id="CLU_029848_0_0_11"/>
<dbReference type="OrthoDB" id="9807553at2"/>
<dbReference type="UniPathway" id="UPA00075">
    <property type="reaction ID" value="UER00335"/>
</dbReference>
<dbReference type="Proteomes" id="UP000002077">
    <property type="component" value="Chromosome"/>
</dbReference>
<dbReference type="GO" id="GO:0005737">
    <property type="term" value="C:cytoplasm"/>
    <property type="evidence" value="ECO:0007669"/>
    <property type="project" value="UniProtKB-SubCell"/>
</dbReference>
<dbReference type="GO" id="GO:0004019">
    <property type="term" value="F:adenylosuccinate synthase activity"/>
    <property type="evidence" value="ECO:0007669"/>
    <property type="project" value="UniProtKB-UniRule"/>
</dbReference>
<dbReference type="GO" id="GO:0005525">
    <property type="term" value="F:GTP binding"/>
    <property type="evidence" value="ECO:0007669"/>
    <property type="project" value="UniProtKB-UniRule"/>
</dbReference>
<dbReference type="GO" id="GO:0000287">
    <property type="term" value="F:magnesium ion binding"/>
    <property type="evidence" value="ECO:0007669"/>
    <property type="project" value="UniProtKB-UniRule"/>
</dbReference>
<dbReference type="GO" id="GO:0044208">
    <property type="term" value="P:'de novo' AMP biosynthetic process"/>
    <property type="evidence" value="ECO:0007669"/>
    <property type="project" value="UniProtKB-UniRule"/>
</dbReference>
<dbReference type="GO" id="GO:0046040">
    <property type="term" value="P:IMP metabolic process"/>
    <property type="evidence" value="ECO:0007669"/>
    <property type="project" value="TreeGrafter"/>
</dbReference>
<dbReference type="CDD" id="cd03108">
    <property type="entry name" value="AdSS"/>
    <property type="match status" value="1"/>
</dbReference>
<dbReference type="FunFam" id="1.10.300.10:FF:000001">
    <property type="entry name" value="Adenylosuccinate synthetase"/>
    <property type="match status" value="1"/>
</dbReference>
<dbReference type="FunFam" id="3.90.170.10:FF:000001">
    <property type="entry name" value="Adenylosuccinate synthetase"/>
    <property type="match status" value="1"/>
</dbReference>
<dbReference type="Gene3D" id="3.40.440.10">
    <property type="entry name" value="Adenylosuccinate Synthetase, subunit A, domain 1"/>
    <property type="match status" value="1"/>
</dbReference>
<dbReference type="Gene3D" id="1.10.300.10">
    <property type="entry name" value="Adenylosuccinate Synthetase, subunit A, domain 2"/>
    <property type="match status" value="1"/>
</dbReference>
<dbReference type="Gene3D" id="3.90.170.10">
    <property type="entry name" value="Adenylosuccinate Synthetase, subunit A, domain 3"/>
    <property type="match status" value="1"/>
</dbReference>
<dbReference type="HAMAP" id="MF_00011">
    <property type="entry name" value="Adenylosucc_synth"/>
    <property type="match status" value="1"/>
</dbReference>
<dbReference type="InterPro" id="IPR018220">
    <property type="entry name" value="Adenylosuccin_syn_GTP-bd"/>
</dbReference>
<dbReference type="InterPro" id="IPR033128">
    <property type="entry name" value="Adenylosuccin_syn_Lys_AS"/>
</dbReference>
<dbReference type="InterPro" id="IPR042109">
    <property type="entry name" value="Adenylosuccinate_synth_dom1"/>
</dbReference>
<dbReference type="InterPro" id="IPR042110">
    <property type="entry name" value="Adenylosuccinate_synth_dom2"/>
</dbReference>
<dbReference type="InterPro" id="IPR042111">
    <property type="entry name" value="Adenylosuccinate_synth_dom3"/>
</dbReference>
<dbReference type="InterPro" id="IPR001114">
    <property type="entry name" value="Adenylosuccinate_synthetase"/>
</dbReference>
<dbReference type="InterPro" id="IPR027417">
    <property type="entry name" value="P-loop_NTPase"/>
</dbReference>
<dbReference type="NCBIfam" id="NF002223">
    <property type="entry name" value="PRK01117.1"/>
    <property type="match status" value="1"/>
</dbReference>
<dbReference type="NCBIfam" id="TIGR00184">
    <property type="entry name" value="purA"/>
    <property type="match status" value="1"/>
</dbReference>
<dbReference type="PANTHER" id="PTHR11846">
    <property type="entry name" value="ADENYLOSUCCINATE SYNTHETASE"/>
    <property type="match status" value="1"/>
</dbReference>
<dbReference type="PANTHER" id="PTHR11846:SF0">
    <property type="entry name" value="ADENYLOSUCCINATE SYNTHETASE"/>
    <property type="match status" value="1"/>
</dbReference>
<dbReference type="Pfam" id="PF00709">
    <property type="entry name" value="Adenylsucc_synt"/>
    <property type="match status" value="1"/>
</dbReference>
<dbReference type="SMART" id="SM00788">
    <property type="entry name" value="Adenylsucc_synt"/>
    <property type="match status" value="1"/>
</dbReference>
<dbReference type="SUPFAM" id="SSF52540">
    <property type="entry name" value="P-loop containing nucleoside triphosphate hydrolases"/>
    <property type="match status" value="1"/>
</dbReference>
<dbReference type="PROSITE" id="PS01266">
    <property type="entry name" value="ADENYLOSUCCIN_SYN_1"/>
    <property type="match status" value="1"/>
</dbReference>
<dbReference type="PROSITE" id="PS00513">
    <property type="entry name" value="ADENYLOSUCCIN_SYN_2"/>
    <property type="match status" value="1"/>
</dbReference>
<evidence type="ECO:0000255" key="1">
    <source>
        <dbReference type="HAMAP-Rule" id="MF_00011"/>
    </source>
</evidence>
<accession>C3PJK0</accession>
<organism>
    <name type="scientific">Corynebacterium aurimucosum (strain ATCC 700975 / DSM 44827 / CIP 107346 / CN-1)</name>
    <name type="common">Corynebacterium nigricans</name>
    <dbReference type="NCBI Taxonomy" id="548476"/>
    <lineage>
        <taxon>Bacteria</taxon>
        <taxon>Bacillati</taxon>
        <taxon>Actinomycetota</taxon>
        <taxon>Actinomycetes</taxon>
        <taxon>Mycobacteriales</taxon>
        <taxon>Corynebacteriaceae</taxon>
        <taxon>Corynebacterium</taxon>
    </lineage>
</organism>
<reference key="1">
    <citation type="journal article" date="2010" name="BMC Genomics">
        <title>Complete genome sequence and lifestyle of black-pigmented Corynebacterium aurimucosum ATCC 700975 (formerly C. nigricans CN-1) isolated from a vaginal swab of a woman with spontaneous abortion.</title>
        <authorList>
            <person name="Trost E."/>
            <person name="Gotker S."/>
            <person name="Schneider J."/>
            <person name="Schneiker-Bekel S."/>
            <person name="Szczepanowski R."/>
            <person name="Tilker A."/>
            <person name="Viehoever P."/>
            <person name="Arnold W."/>
            <person name="Bekel T."/>
            <person name="Blom J."/>
            <person name="Gartemann K.H."/>
            <person name="Linke B."/>
            <person name="Goesmann A."/>
            <person name="Puhler A."/>
            <person name="Shukla S.K."/>
            <person name="Tauch A."/>
        </authorList>
    </citation>
    <scope>NUCLEOTIDE SEQUENCE [LARGE SCALE GENOMIC DNA]</scope>
    <source>
        <strain>ATCC 700975 / DSM 44827 / CIP 107346 / CN-1</strain>
    </source>
</reference>
<name>PURA_CORA7</name>
<feature type="chain" id="PRO_1000194742" description="Adenylosuccinate synthetase">
    <location>
        <begin position="1"/>
        <end position="430"/>
    </location>
</feature>
<feature type="active site" description="Proton acceptor" evidence="1">
    <location>
        <position position="13"/>
    </location>
</feature>
<feature type="active site" description="Proton donor" evidence="1">
    <location>
        <position position="41"/>
    </location>
</feature>
<feature type="binding site" evidence="1">
    <location>
        <begin position="12"/>
        <end position="18"/>
    </location>
    <ligand>
        <name>GTP</name>
        <dbReference type="ChEBI" id="CHEBI:37565"/>
    </ligand>
</feature>
<feature type="binding site" description="in other chain" evidence="1">
    <location>
        <begin position="13"/>
        <end position="16"/>
    </location>
    <ligand>
        <name>IMP</name>
        <dbReference type="ChEBI" id="CHEBI:58053"/>
        <note>ligand shared between dimeric partners</note>
    </ligand>
</feature>
<feature type="binding site" evidence="1">
    <location>
        <position position="13"/>
    </location>
    <ligand>
        <name>Mg(2+)</name>
        <dbReference type="ChEBI" id="CHEBI:18420"/>
    </ligand>
</feature>
<feature type="binding site" description="in other chain" evidence="1">
    <location>
        <begin position="38"/>
        <end position="41"/>
    </location>
    <ligand>
        <name>IMP</name>
        <dbReference type="ChEBI" id="CHEBI:58053"/>
        <note>ligand shared between dimeric partners</note>
    </ligand>
</feature>
<feature type="binding site" evidence="1">
    <location>
        <begin position="40"/>
        <end position="42"/>
    </location>
    <ligand>
        <name>GTP</name>
        <dbReference type="ChEBI" id="CHEBI:37565"/>
    </ligand>
</feature>
<feature type="binding site" evidence="1">
    <location>
        <position position="40"/>
    </location>
    <ligand>
        <name>Mg(2+)</name>
        <dbReference type="ChEBI" id="CHEBI:18420"/>
    </ligand>
</feature>
<feature type="binding site" description="in other chain" evidence="1">
    <location>
        <position position="128"/>
    </location>
    <ligand>
        <name>IMP</name>
        <dbReference type="ChEBI" id="CHEBI:58053"/>
        <note>ligand shared between dimeric partners</note>
    </ligand>
</feature>
<feature type="binding site" evidence="1">
    <location>
        <position position="142"/>
    </location>
    <ligand>
        <name>IMP</name>
        <dbReference type="ChEBI" id="CHEBI:58053"/>
        <note>ligand shared between dimeric partners</note>
    </ligand>
</feature>
<feature type="binding site" description="in other chain" evidence="1">
    <location>
        <position position="223"/>
    </location>
    <ligand>
        <name>IMP</name>
        <dbReference type="ChEBI" id="CHEBI:58053"/>
        <note>ligand shared between dimeric partners</note>
    </ligand>
</feature>
<feature type="binding site" description="in other chain" evidence="1">
    <location>
        <position position="238"/>
    </location>
    <ligand>
        <name>IMP</name>
        <dbReference type="ChEBI" id="CHEBI:58053"/>
        <note>ligand shared between dimeric partners</note>
    </ligand>
</feature>
<feature type="binding site" evidence="1">
    <location>
        <begin position="298"/>
        <end position="304"/>
    </location>
    <ligand>
        <name>substrate</name>
    </ligand>
</feature>
<feature type="binding site" description="in other chain" evidence="1">
    <location>
        <position position="302"/>
    </location>
    <ligand>
        <name>IMP</name>
        <dbReference type="ChEBI" id="CHEBI:58053"/>
        <note>ligand shared between dimeric partners</note>
    </ligand>
</feature>
<feature type="binding site" evidence="1">
    <location>
        <position position="304"/>
    </location>
    <ligand>
        <name>GTP</name>
        <dbReference type="ChEBI" id="CHEBI:37565"/>
    </ligand>
</feature>
<feature type="binding site" evidence="1">
    <location>
        <begin position="330"/>
        <end position="332"/>
    </location>
    <ligand>
        <name>GTP</name>
        <dbReference type="ChEBI" id="CHEBI:37565"/>
    </ligand>
</feature>
<feature type="binding site" evidence="1">
    <location>
        <begin position="412"/>
        <end position="414"/>
    </location>
    <ligand>
        <name>GTP</name>
        <dbReference type="ChEBI" id="CHEBI:37565"/>
    </ligand>
</feature>